<comment type="function">
    <text evidence="1">Plays a critical role in the incorporation of lipoproteins in the outer membrane after they are released by the LolA protein.</text>
</comment>
<comment type="subunit">
    <text evidence="1">Monomer.</text>
</comment>
<comment type="subcellular location">
    <subcellularLocation>
        <location evidence="1">Cell outer membrane</location>
        <topology evidence="1">Lipid-anchor</topology>
    </subcellularLocation>
</comment>
<comment type="similarity">
    <text evidence="1">Belongs to the LolB family.</text>
</comment>
<organism>
    <name type="scientific">Dechloromonas aromatica (strain RCB)</name>
    <dbReference type="NCBI Taxonomy" id="159087"/>
    <lineage>
        <taxon>Bacteria</taxon>
        <taxon>Pseudomonadati</taxon>
        <taxon>Pseudomonadota</taxon>
        <taxon>Betaproteobacteria</taxon>
        <taxon>Rhodocyclales</taxon>
        <taxon>Azonexaceae</taxon>
        <taxon>Dechloromonas</taxon>
    </lineage>
</organism>
<reference key="1">
    <citation type="journal article" date="2009" name="BMC Genomics">
        <title>Metabolic analysis of the soil microbe Dechloromonas aromatica str. RCB: indications of a surprisingly complex life-style and cryptic anaerobic pathways for aromatic degradation.</title>
        <authorList>
            <person name="Salinero K.K."/>
            <person name="Keller K."/>
            <person name="Feil W.S."/>
            <person name="Feil H."/>
            <person name="Trong S."/>
            <person name="Di Bartolo G."/>
            <person name="Lapidus A."/>
        </authorList>
    </citation>
    <scope>NUCLEOTIDE SEQUENCE [LARGE SCALE GENOMIC DNA]</scope>
    <source>
        <strain>RCB</strain>
    </source>
</reference>
<proteinExistence type="inferred from homology"/>
<dbReference type="EMBL" id="CP000089">
    <property type="protein sequence ID" value="AAZ48457.1"/>
    <property type="molecule type" value="Genomic_DNA"/>
</dbReference>
<dbReference type="SMR" id="Q479M4"/>
<dbReference type="STRING" id="159087.Daro_3728"/>
<dbReference type="KEGG" id="dar:Daro_3728"/>
<dbReference type="eggNOG" id="COG3017">
    <property type="taxonomic scope" value="Bacteria"/>
</dbReference>
<dbReference type="HOGENOM" id="CLU_092816_3_1_4"/>
<dbReference type="GO" id="GO:0009279">
    <property type="term" value="C:cell outer membrane"/>
    <property type="evidence" value="ECO:0007669"/>
    <property type="project" value="UniProtKB-SubCell"/>
</dbReference>
<dbReference type="GO" id="GO:0044874">
    <property type="term" value="P:lipoprotein localization to outer membrane"/>
    <property type="evidence" value="ECO:0007669"/>
    <property type="project" value="UniProtKB-UniRule"/>
</dbReference>
<dbReference type="GO" id="GO:0015031">
    <property type="term" value="P:protein transport"/>
    <property type="evidence" value="ECO:0007669"/>
    <property type="project" value="UniProtKB-KW"/>
</dbReference>
<dbReference type="CDD" id="cd16326">
    <property type="entry name" value="LolB"/>
    <property type="match status" value="1"/>
</dbReference>
<dbReference type="Gene3D" id="2.50.20.10">
    <property type="entry name" value="Lipoprotein localisation LolA/LolB/LppX"/>
    <property type="match status" value="1"/>
</dbReference>
<dbReference type="HAMAP" id="MF_00233">
    <property type="entry name" value="LolB"/>
    <property type="match status" value="1"/>
</dbReference>
<dbReference type="InterPro" id="IPR029046">
    <property type="entry name" value="LolA/LolB/LppX"/>
</dbReference>
<dbReference type="InterPro" id="IPR004565">
    <property type="entry name" value="OM_lipoprot_LolB"/>
</dbReference>
<dbReference type="NCBIfam" id="TIGR00548">
    <property type="entry name" value="lolB"/>
    <property type="match status" value="1"/>
</dbReference>
<dbReference type="Pfam" id="PF03550">
    <property type="entry name" value="LolB"/>
    <property type="match status" value="1"/>
</dbReference>
<dbReference type="SUPFAM" id="SSF89392">
    <property type="entry name" value="Prokaryotic lipoproteins and lipoprotein localization factors"/>
    <property type="match status" value="1"/>
</dbReference>
<dbReference type="PROSITE" id="PS51257">
    <property type="entry name" value="PROKAR_LIPOPROTEIN"/>
    <property type="match status" value="1"/>
</dbReference>
<accession>Q479M4</accession>
<feature type="signal peptide" evidence="1">
    <location>
        <begin position="1"/>
        <end position="16"/>
    </location>
</feature>
<feature type="chain" id="PRO_0000336600" description="Outer-membrane lipoprotein LolB">
    <location>
        <begin position="17"/>
        <end position="190"/>
    </location>
</feature>
<feature type="lipid moiety-binding region" description="N-palmitoyl cysteine" evidence="1">
    <location>
        <position position="17"/>
    </location>
</feature>
<feature type="lipid moiety-binding region" description="S-diacylglycerol cysteine" evidence="1">
    <location>
        <position position="17"/>
    </location>
</feature>
<protein>
    <recommendedName>
        <fullName evidence="1">Outer-membrane lipoprotein LolB</fullName>
    </recommendedName>
</protein>
<sequence>MRLRFSLLLTVSLLAGCASAPPATLQHRDNIRDFSLEGRFALRVAMPDQAPQSSGGRLSWTHRNRSDRVLLSSPLGYGLAEIETTPELSRLRTAEGKQSESTDPDTLIEEVTGQRLPVTRMPAWLLGRSGGKAQIFNDPIGRPGKLLEDGWQVDYTYDDEAPAALPSRLNISRDGEIELKLRIEEWKETP</sequence>
<evidence type="ECO:0000255" key="1">
    <source>
        <dbReference type="HAMAP-Rule" id="MF_00233"/>
    </source>
</evidence>
<name>LOLB_DECAR</name>
<keyword id="KW-0998">Cell outer membrane</keyword>
<keyword id="KW-0143">Chaperone</keyword>
<keyword id="KW-0449">Lipoprotein</keyword>
<keyword id="KW-0472">Membrane</keyword>
<keyword id="KW-0564">Palmitate</keyword>
<keyword id="KW-0653">Protein transport</keyword>
<keyword id="KW-0732">Signal</keyword>
<keyword id="KW-0813">Transport</keyword>
<gene>
    <name evidence="1" type="primary">lolB</name>
    <name type="ordered locus">Daro_3728</name>
</gene>